<accession>P64102</accession>
<accession>O25987</accession>
<evidence type="ECO:0000255" key="1"/>
<evidence type="ECO:0000305" key="2"/>
<proteinExistence type="inferred from homology"/>
<name>EXDL2_HELPJ</name>
<feature type="chain" id="PRO_0000129139" description="Putative biopolymer transport protein ExbD-like 2">
    <location>
        <begin position="1"/>
        <end position="133"/>
    </location>
</feature>
<feature type="topological domain" description="Cytoplasmic" evidence="1">
    <location>
        <begin position="1"/>
        <end position="9"/>
    </location>
</feature>
<feature type="transmembrane region" description="Helical" evidence="1">
    <location>
        <begin position="10"/>
        <end position="30"/>
    </location>
</feature>
<feature type="topological domain" description="Periplasmic" evidence="1">
    <location>
        <begin position="31"/>
        <end position="133"/>
    </location>
</feature>
<comment type="subcellular location">
    <subcellularLocation>
        <location evidence="2">Cell inner membrane</location>
        <topology evidence="2">Single-pass type II membrane protein</topology>
    </subcellularLocation>
</comment>
<comment type="similarity">
    <text evidence="2">Belongs to the ExbD/TolR family.</text>
</comment>
<keyword id="KW-0997">Cell inner membrane</keyword>
<keyword id="KW-1003">Cell membrane</keyword>
<keyword id="KW-0472">Membrane</keyword>
<keyword id="KW-0653">Protein transport</keyword>
<keyword id="KW-0812">Transmembrane</keyword>
<keyword id="KW-1133">Transmembrane helix</keyword>
<keyword id="KW-0813">Transport</keyword>
<sequence>MKKVESMNVVPFIDIMLVLLVIVLTTASFVQTSKLPISIPQVDKDSTDSKDVLDKKQVTIAISNKGSFYFDDKEISFENLKHKVSTLAKDTPIVLQGDKKSNLDNFIKVVDLLQTNNLKQLYILVEDKKNQKN</sequence>
<dbReference type="EMBL" id="AE001439">
    <property type="protein sequence ID" value="AAD06915.1"/>
    <property type="molecule type" value="Genomic_DNA"/>
</dbReference>
<dbReference type="RefSeq" id="WP_000755082.1">
    <property type="nucleotide sequence ID" value="NZ_CP011330.1"/>
</dbReference>
<dbReference type="SMR" id="P64102"/>
<dbReference type="KEGG" id="hpj:jhp_1339"/>
<dbReference type="PATRIC" id="fig|85963.30.peg.1214"/>
<dbReference type="eggNOG" id="COG0848">
    <property type="taxonomic scope" value="Bacteria"/>
</dbReference>
<dbReference type="Proteomes" id="UP000000804">
    <property type="component" value="Chromosome"/>
</dbReference>
<dbReference type="GO" id="GO:0005886">
    <property type="term" value="C:plasma membrane"/>
    <property type="evidence" value="ECO:0007669"/>
    <property type="project" value="UniProtKB-SubCell"/>
</dbReference>
<dbReference type="GO" id="GO:0022857">
    <property type="term" value="F:transmembrane transporter activity"/>
    <property type="evidence" value="ECO:0007669"/>
    <property type="project" value="InterPro"/>
</dbReference>
<dbReference type="GO" id="GO:0015031">
    <property type="term" value="P:protein transport"/>
    <property type="evidence" value="ECO:0007669"/>
    <property type="project" value="UniProtKB-KW"/>
</dbReference>
<dbReference type="Gene3D" id="3.30.420.270">
    <property type="match status" value="1"/>
</dbReference>
<dbReference type="InterPro" id="IPR003400">
    <property type="entry name" value="ExbD"/>
</dbReference>
<dbReference type="PANTHER" id="PTHR30558:SF12">
    <property type="entry name" value="BIOPOLYMER TRANSPORT PROTEIN EXBD"/>
    <property type="match status" value="1"/>
</dbReference>
<dbReference type="PANTHER" id="PTHR30558">
    <property type="entry name" value="EXBD MEMBRANE COMPONENT OF PMF-DRIVEN MACROMOLECULE IMPORT SYSTEM"/>
    <property type="match status" value="1"/>
</dbReference>
<dbReference type="Pfam" id="PF02472">
    <property type="entry name" value="ExbD"/>
    <property type="match status" value="1"/>
</dbReference>
<protein>
    <recommendedName>
        <fullName>Putative biopolymer transport protein ExbD-like 2</fullName>
    </recommendedName>
</protein>
<organism>
    <name type="scientific">Helicobacter pylori (strain J99 / ATCC 700824)</name>
    <name type="common">Campylobacter pylori J99</name>
    <dbReference type="NCBI Taxonomy" id="85963"/>
    <lineage>
        <taxon>Bacteria</taxon>
        <taxon>Pseudomonadati</taxon>
        <taxon>Campylobacterota</taxon>
        <taxon>Epsilonproteobacteria</taxon>
        <taxon>Campylobacterales</taxon>
        <taxon>Helicobacteraceae</taxon>
        <taxon>Helicobacter</taxon>
    </lineage>
</organism>
<reference key="1">
    <citation type="journal article" date="1999" name="Nature">
        <title>Genomic sequence comparison of two unrelated isolates of the human gastric pathogen Helicobacter pylori.</title>
        <authorList>
            <person name="Alm R.A."/>
            <person name="Ling L.-S.L."/>
            <person name="Moir D.T."/>
            <person name="King B.L."/>
            <person name="Brown E.D."/>
            <person name="Doig P.C."/>
            <person name="Smith D.R."/>
            <person name="Noonan B."/>
            <person name="Guild B.C."/>
            <person name="deJonge B.L."/>
            <person name="Carmel G."/>
            <person name="Tummino P.J."/>
            <person name="Caruso A."/>
            <person name="Uria-Nickelsen M."/>
            <person name="Mills D.M."/>
            <person name="Ives C."/>
            <person name="Gibson R."/>
            <person name="Merberg D."/>
            <person name="Mills S.D."/>
            <person name="Jiang Q."/>
            <person name="Taylor D.E."/>
            <person name="Vovis G.F."/>
            <person name="Trust T.J."/>
        </authorList>
    </citation>
    <scope>NUCLEOTIDE SEQUENCE [LARGE SCALE GENOMIC DNA]</scope>
    <source>
        <strain>J99 / ATCC 700824</strain>
    </source>
</reference>
<gene>
    <name type="ordered locus">jhp_1339</name>
</gene>